<proteinExistence type="evidence at protein level"/>
<keyword id="KW-1064">Adaptive immunity</keyword>
<keyword id="KW-0094">Blood coagulation</keyword>
<keyword id="KW-0175">Coiled coil</keyword>
<keyword id="KW-0903">Direct protein sequencing</keyword>
<keyword id="KW-1015">Disulfide bond</keyword>
<keyword id="KW-0356">Hemostasis</keyword>
<keyword id="KW-0391">Immunity</keyword>
<keyword id="KW-0399">Innate immunity</keyword>
<keyword id="KW-0964">Secreted</keyword>
<feature type="peptide" id="PRO_0000009064" description="Fibrinopeptide B">
    <location>
        <begin position="1"/>
        <end position="10"/>
    </location>
</feature>
<feature type="non-terminal residue">
    <location>
        <position position="10"/>
    </location>
</feature>
<sequence>HDDKAAVDAR</sequence>
<reference key="1">
    <citation type="journal article" date="1973" name="Syst. Zool.">
        <title>Mammalian phylogeny based on fibrinopeptide amino acid sequences.</title>
        <authorList>
            <person name="O'Neil P.B."/>
            <person name="Doolittle R.F."/>
        </authorList>
    </citation>
    <scope>PROTEIN SEQUENCE</scope>
</reference>
<evidence type="ECO:0000250" key="1">
    <source>
        <dbReference type="UniProtKB" id="E9PV24"/>
    </source>
</evidence>
<evidence type="ECO:0000250" key="2">
    <source>
        <dbReference type="UniProtKB" id="P02675"/>
    </source>
</evidence>
<protein>
    <recommendedName>
        <fullName>Fibrinogen beta chain</fullName>
    </recommendedName>
    <component>
        <recommendedName>
            <fullName>Fibrinopeptide B</fullName>
        </recommendedName>
    </component>
</protein>
<accession>P14537</accession>
<name>FIBB_CERSI</name>
<gene>
    <name type="primary">FGB</name>
</gene>
<dbReference type="GO" id="GO:0005576">
    <property type="term" value="C:extracellular region"/>
    <property type="evidence" value="ECO:0007669"/>
    <property type="project" value="UniProtKB-SubCell"/>
</dbReference>
<dbReference type="GO" id="GO:0002250">
    <property type="term" value="P:adaptive immune response"/>
    <property type="evidence" value="ECO:0007669"/>
    <property type="project" value="UniProtKB-KW"/>
</dbReference>
<dbReference type="GO" id="GO:0007596">
    <property type="term" value="P:blood coagulation"/>
    <property type="evidence" value="ECO:0007669"/>
    <property type="project" value="UniProtKB-KW"/>
</dbReference>
<dbReference type="GO" id="GO:0045087">
    <property type="term" value="P:innate immune response"/>
    <property type="evidence" value="ECO:0007669"/>
    <property type="project" value="UniProtKB-KW"/>
</dbReference>
<organism>
    <name type="scientific">Ceratotherium simum</name>
    <name type="common">White rhinoceros</name>
    <name type="synonym">Square-lipped rhinoceros</name>
    <dbReference type="NCBI Taxonomy" id="9807"/>
    <lineage>
        <taxon>Eukaryota</taxon>
        <taxon>Metazoa</taxon>
        <taxon>Chordata</taxon>
        <taxon>Craniata</taxon>
        <taxon>Vertebrata</taxon>
        <taxon>Euteleostomi</taxon>
        <taxon>Mammalia</taxon>
        <taxon>Eutheria</taxon>
        <taxon>Laurasiatheria</taxon>
        <taxon>Perissodactyla</taxon>
        <taxon>Rhinocerotidae</taxon>
        <taxon>Ceratotherium</taxon>
    </lineage>
</organism>
<comment type="function">
    <text evidence="1">Cleaved by the protease thrombin to yield monomers which, together with fibrinogen alpha (FGA) and fibrinogen gamma (FGG), polymerize to form an insoluble fibrin matrix. Fibrin has a major function in hemostasis as one of the primary components of blood clots. In addition, functions during the early stages of wound repair to stabilize the lesion and guide cell migration during re-epithelialization. Was originally thought to be essential for platelet aggregation, based on in vitro studies using anticoagulated blood. However subsequent studies have shown that it is not absolutely required for thrombus formation in vivo. Enhances expression of SELP in activated platelets. Maternal fibrinogen is essential for successful pregnancy. Fibrin deposition is also associated with infection, where it protects against IFNG-mediated hemorrhage. May also facilitate the antibacterial immune response via both innate and T-cell mediated pathways.</text>
</comment>
<comment type="subunit">
    <text evidence="2">Heterohexamer; disulfide linked. Contains 2 sets of 3 non-identical chains (alpha, beta and gamma). The 2 heterotrimers are in head to head conformation with the N-termini in a small central domain (By similarity).</text>
</comment>
<comment type="subcellular location">
    <subcellularLocation>
        <location>Secreted</location>
    </subcellularLocation>
</comment>
<comment type="domain">
    <text evidence="2">A long coiled coil structure formed by 3 polypeptide chains connects the central nodule to the C-terminal domains (distal nodules). The long C-terminal ends of the alpha chains fold back, contributing a fourth strand to the coiled coil structure.</text>
</comment>
<comment type="PTM">
    <text>Conversion of fibrinogen to fibrin is triggered by thrombin, which cleaves fibrinopeptides A and B from alpha and beta chains, and thus exposes the N-terminal polymerization sites responsible for the formation of the soft clot.</text>
</comment>